<organism>
    <name type="scientific">Clostridium acetobutylicum (strain ATCC 824 / DSM 792 / JCM 1419 / IAM 19013 / LMG 5710 / NBRC 13948 / NRRL B-527 / VKM B-1787 / 2291 / W)</name>
    <dbReference type="NCBI Taxonomy" id="272562"/>
    <lineage>
        <taxon>Bacteria</taxon>
        <taxon>Bacillati</taxon>
        <taxon>Bacillota</taxon>
        <taxon>Clostridia</taxon>
        <taxon>Eubacteriales</taxon>
        <taxon>Clostridiaceae</taxon>
        <taxon>Clostridium</taxon>
    </lineage>
</organism>
<protein>
    <recommendedName>
        <fullName evidence="1">tRNA(Met) cytidine acetate ligase</fullName>
        <ecNumber evidence="1">6.3.4.-</ecNumber>
    </recommendedName>
</protein>
<proteinExistence type="inferred from homology"/>
<comment type="function">
    <text evidence="1">Catalyzes the formation of N(4)-acetylcytidine (ac(4)C) at the wobble position of elongator tRNA(Met), using acetate and ATP as substrates. First activates an acetate ion to form acetyladenylate (Ac-AMP) and then transfers the acetyl group to tRNA to form ac(4)C34.</text>
</comment>
<comment type="catalytic activity">
    <reaction evidence="1">
        <text>cytidine(34) in elongator tRNA(Met) + acetate + ATP = N(4)-acetylcytidine(34) in elongator tRNA(Met) + AMP + diphosphate</text>
        <dbReference type="Rhea" id="RHEA:58144"/>
        <dbReference type="Rhea" id="RHEA-COMP:10693"/>
        <dbReference type="Rhea" id="RHEA-COMP:10694"/>
        <dbReference type="ChEBI" id="CHEBI:30089"/>
        <dbReference type="ChEBI" id="CHEBI:30616"/>
        <dbReference type="ChEBI" id="CHEBI:33019"/>
        <dbReference type="ChEBI" id="CHEBI:74900"/>
        <dbReference type="ChEBI" id="CHEBI:82748"/>
        <dbReference type="ChEBI" id="CHEBI:456215"/>
    </reaction>
</comment>
<comment type="subcellular location">
    <subcellularLocation>
        <location evidence="1">Cytoplasm</location>
    </subcellularLocation>
</comment>
<comment type="similarity">
    <text evidence="1">Belongs to the TmcAL family.</text>
</comment>
<accession>Q97IA9</accession>
<dbReference type="EC" id="6.3.4.-" evidence="1"/>
<dbReference type="EMBL" id="AE001437">
    <property type="protein sequence ID" value="AAK79707.1"/>
    <property type="molecule type" value="Genomic_DNA"/>
</dbReference>
<dbReference type="PIR" id="H97114">
    <property type="entry name" value="H97114"/>
</dbReference>
<dbReference type="RefSeq" id="NP_348367.1">
    <property type="nucleotide sequence ID" value="NC_003030.1"/>
</dbReference>
<dbReference type="RefSeq" id="WP_010965048.1">
    <property type="nucleotide sequence ID" value="NC_003030.1"/>
</dbReference>
<dbReference type="SMR" id="Q97IA9"/>
<dbReference type="STRING" id="272562.CA_C1741"/>
<dbReference type="KEGG" id="cac:CA_C1741"/>
<dbReference type="PATRIC" id="fig|272562.8.peg.1943"/>
<dbReference type="eggNOG" id="COG1323">
    <property type="taxonomic scope" value="Bacteria"/>
</dbReference>
<dbReference type="HOGENOM" id="CLU_038915_0_1_9"/>
<dbReference type="OrthoDB" id="9769796at2"/>
<dbReference type="Proteomes" id="UP000000814">
    <property type="component" value="Chromosome"/>
</dbReference>
<dbReference type="GO" id="GO:0005737">
    <property type="term" value="C:cytoplasm"/>
    <property type="evidence" value="ECO:0007669"/>
    <property type="project" value="UniProtKB-SubCell"/>
</dbReference>
<dbReference type="GO" id="GO:0005524">
    <property type="term" value="F:ATP binding"/>
    <property type="evidence" value="ECO:0007669"/>
    <property type="project" value="UniProtKB-KW"/>
</dbReference>
<dbReference type="GO" id="GO:0016879">
    <property type="term" value="F:ligase activity, forming carbon-nitrogen bonds"/>
    <property type="evidence" value="ECO:0007669"/>
    <property type="project" value="UniProtKB-UniRule"/>
</dbReference>
<dbReference type="GO" id="GO:0000049">
    <property type="term" value="F:tRNA binding"/>
    <property type="evidence" value="ECO:0007669"/>
    <property type="project" value="UniProtKB-KW"/>
</dbReference>
<dbReference type="GO" id="GO:0006400">
    <property type="term" value="P:tRNA modification"/>
    <property type="evidence" value="ECO:0007669"/>
    <property type="project" value="UniProtKB-UniRule"/>
</dbReference>
<dbReference type="Gene3D" id="3.40.50.620">
    <property type="entry name" value="HUPs"/>
    <property type="match status" value="1"/>
</dbReference>
<dbReference type="HAMAP" id="MF_01539">
    <property type="entry name" value="TmcAL"/>
    <property type="match status" value="1"/>
</dbReference>
<dbReference type="InterPro" id="IPR014729">
    <property type="entry name" value="Rossmann-like_a/b/a_fold"/>
</dbReference>
<dbReference type="InterPro" id="IPR008513">
    <property type="entry name" value="tRNA(Met)_cyd_acetate_ligase"/>
</dbReference>
<dbReference type="NCBIfam" id="NF010191">
    <property type="entry name" value="PRK13670.1"/>
    <property type="match status" value="1"/>
</dbReference>
<dbReference type="PANTHER" id="PTHR37825">
    <property type="entry name" value="TRNA(MET) CYTIDINE ACETATE LIGASE"/>
    <property type="match status" value="1"/>
</dbReference>
<dbReference type="PANTHER" id="PTHR37825:SF1">
    <property type="entry name" value="TRNA(MET) CYTIDINE ACETATE LIGASE"/>
    <property type="match status" value="1"/>
</dbReference>
<dbReference type="Pfam" id="PF05636">
    <property type="entry name" value="HIGH_NTase1"/>
    <property type="match status" value="1"/>
</dbReference>
<dbReference type="SUPFAM" id="SSF52374">
    <property type="entry name" value="Nucleotidylyl transferase"/>
    <property type="match status" value="1"/>
</dbReference>
<sequence>MNITGIIAEYNPMHNGHIHHLEKTKEICKSDVILCVMSGDFVQRGEPAIIDKWSRAYAALSSGVDLVIELPCVYSLSSAEFFAYGAVSLLNSLGSVSNICFGSEEGEMHDIYLISKILVDEPYEYKSILKDYLNQGFSFPKSRMHALEMYLNSSLSKVDHGLNHDILSSSNNILGVEYCKSLIKLKSNIKPYTIKREGNNYNDLELKTISSASAIRNALKSKKEISTLRYQVPKKTFDLISDNINSLCYKDYIFDYIKYKALTSKESLNKLPDVSEGIDNKIYNSLLKCSNMDSLMTLTKNKRYTYSRISRILTQYFIGFDCYNTESLRNSPCPYARILGFNEKGKYALKEFKKTSSIPLITKVNNYNFDALSLDINATKAYSLINKSVNPLDDYYRKIIIV</sequence>
<keyword id="KW-0067">ATP-binding</keyword>
<keyword id="KW-0963">Cytoplasm</keyword>
<keyword id="KW-0436">Ligase</keyword>
<keyword id="KW-0547">Nucleotide-binding</keyword>
<keyword id="KW-1185">Reference proteome</keyword>
<keyword id="KW-0694">RNA-binding</keyword>
<keyword id="KW-0819">tRNA processing</keyword>
<keyword id="KW-0820">tRNA-binding</keyword>
<gene>
    <name evidence="1" type="primary">tmcAL</name>
    <name type="ordered locus">CA_C1741</name>
</gene>
<name>TMCAL_CLOAB</name>
<reference key="1">
    <citation type="journal article" date="2001" name="J. Bacteriol.">
        <title>Genome sequence and comparative analysis of the solvent-producing bacterium Clostridium acetobutylicum.</title>
        <authorList>
            <person name="Noelling J."/>
            <person name="Breton G."/>
            <person name="Omelchenko M.V."/>
            <person name="Makarova K.S."/>
            <person name="Zeng Q."/>
            <person name="Gibson R."/>
            <person name="Lee H.M."/>
            <person name="Dubois J."/>
            <person name="Qiu D."/>
            <person name="Hitti J."/>
            <person name="Wolf Y.I."/>
            <person name="Tatusov R.L."/>
            <person name="Sabathe F."/>
            <person name="Doucette-Stamm L.A."/>
            <person name="Soucaille P."/>
            <person name="Daly M.J."/>
            <person name="Bennett G.N."/>
            <person name="Koonin E.V."/>
            <person name="Smith D.R."/>
        </authorList>
    </citation>
    <scope>NUCLEOTIDE SEQUENCE [LARGE SCALE GENOMIC DNA]</scope>
    <source>
        <strain>ATCC 824 / DSM 792 / JCM 1419 / IAM 19013 / LMG 5710 / NBRC 13948 / NRRL B-527 / VKM B-1787 / 2291 / W</strain>
    </source>
</reference>
<evidence type="ECO:0000255" key="1">
    <source>
        <dbReference type="HAMAP-Rule" id="MF_01539"/>
    </source>
</evidence>
<feature type="chain" id="PRO_0000147161" description="tRNA(Met) cytidine acetate ligase">
    <location>
        <begin position="1"/>
        <end position="402"/>
    </location>
</feature>
<feature type="binding site" evidence="1">
    <location>
        <begin position="7"/>
        <end position="20"/>
    </location>
    <ligand>
        <name>ATP</name>
        <dbReference type="ChEBI" id="CHEBI:30616"/>
    </ligand>
</feature>
<feature type="binding site" evidence="1">
    <location>
        <position position="102"/>
    </location>
    <ligand>
        <name>ATP</name>
        <dbReference type="ChEBI" id="CHEBI:30616"/>
    </ligand>
</feature>
<feature type="binding site" evidence="1">
    <location>
        <position position="171"/>
    </location>
    <ligand>
        <name>ATP</name>
        <dbReference type="ChEBI" id="CHEBI:30616"/>
    </ligand>
</feature>
<feature type="binding site" evidence="1">
    <location>
        <position position="196"/>
    </location>
    <ligand>
        <name>ATP</name>
        <dbReference type="ChEBI" id="CHEBI:30616"/>
    </ligand>
</feature>